<dbReference type="EMBL" id="AE004437">
    <property type="protein sequence ID" value="AAG18894.1"/>
    <property type="molecule type" value="Genomic_DNA"/>
</dbReference>
<dbReference type="PIR" id="B84191">
    <property type="entry name" value="B84191"/>
</dbReference>
<dbReference type="RefSeq" id="WP_010902188.1">
    <property type="nucleotide sequence ID" value="NC_002607.1"/>
</dbReference>
<dbReference type="SMR" id="Q9HSB3"/>
<dbReference type="FunCoup" id="Q9HSB3">
    <property type="interactions" value="5"/>
</dbReference>
<dbReference type="STRING" id="64091.VNG_0315G"/>
<dbReference type="PaxDb" id="64091-VNG_0315G"/>
<dbReference type="KEGG" id="hal:VNG_0315G"/>
<dbReference type="PATRIC" id="fig|64091.14.peg.233"/>
<dbReference type="HOGENOM" id="CLU_043736_0_0_2"/>
<dbReference type="InParanoid" id="Q9HSB3"/>
<dbReference type="OrthoDB" id="7429at2157"/>
<dbReference type="PhylomeDB" id="Q9HSB3"/>
<dbReference type="Proteomes" id="UP000000554">
    <property type="component" value="Chromosome"/>
</dbReference>
<dbReference type="GO" id="GO:0097550">
    <property type="term" value="C:transcription preinitiation complex"/>
    <property type="evidence" value="ECO:0000318"/>
    <property type="project" value="GO_Central"/>
</dbReference>
<dbReference type="GO" id="GO:0003700">
    <property type="term" value="F:DNA-binding transcription factor activity"/>
    <property type="evidence" value="ECO:0007669"/>
    <property type="project" value="UniProtKB-UniRule"/>
</dbReference>
<dbReference type="GO" id="GO:0017025">
    <property type="term" value="F:TBP-class protein binding"/>
    <property type="evidence" value="ECO:0007669"/>
    <property type="project" value="InterPro"/>
</dbReference>
<dbReference type="GO" id="GO:0008270">
    <property type="term" value="F:zinc ion binding"/>
    <property type="evidence" value="ECO:0007669"/>
    <property type="project" value="UniProtKB-UniRule"/>
</dbReference>
<dbReference type="GO" id="GO:0006352">
    <property type="term" value="P:DNA-templated transcription initiation"/>
    <property type="evidence" value="ECO:0000318"/>
    <property type="project" value="GO_Central"/>
</dbReference>
<dbReference type="GO" id="GO:0070897">
    <property type="term" value="P:transcription preinitiation complex assembly"/>
    <property type="evidence" value="ECO:0007669"/>
    <property type="project" value="InterPro"/>
</dbReference>
<dbReference type="CDD" id="cd20549">
    <property type="entry name" value="CYCLIN_TFIIB_archaea_like_rpt1"/>
    <property type="match status" value="1"/>
</dbReference>
<dbReference type="FunFam" id="1.10.472.10:FF:000023">
    <property type="entry name" value="Transcription initiation factor IIB"/>
    <property type="match status" value="1"/>
</dbReference>
<dbReference type="FunFam" id="1.10.472.170:FF:000001">
    <property type="entry name" value="Transcription initiation factor IIB"/>
    <property type="match status" value="1"/>
</dbReference>
<dbReference type="Gene3D" id="1.10.472.170">
    <property type="match status" value="1"/>
</dbReference>
<dbReference type="Gene3D" id="1.10.472.10">
    <property type="entry name" value="Cyclin-like"/>
    <property type="match status" value="1"/>
</dbReference>
<dbReference type="HAMAP" id="MF_00383">
    <property type="entry name" value="TF2B_arch"/>
    <property type="match status" value="1"/>
</dbReference>
<dbReference type="InterPro" id="IPR013763">
    <property type="entry name" value="Cyclin-like_dom"/>
</dbReference>
<dbReference type="InterPro" id="IPR036915">
    <property type="entry name" value="Cyclin-like_sf"/>
</dbReference>
<dbReference type="InterPro" id="IPR000812">
    <property type="entry name" value="TFIIB"/>
</dbReference>
<dbReference type="InterPro" id="IPR023484">
    <property type="entry name" value="TFIIB_arc"/>
</dbReference>
<dbReference type="InterPro" id="IPR023486">
    <property type="entry name" value="TFIIB_CS"/>
</dbReference>
<dbReference type="InterPro" id="IPR013150">
    <property type="entry name" value="TFIIB_cyclin"/>
</dbReference>
<dbReference type="InterPro" id="IPR013137">
    <property type="entry name" value="Znf_TFIIB"/>
</dbReference>
<dbReference type="NCBIfam" id="NF001658">
    <property type="entry name" value="PRK00423.1"/>
    <property type="match status" value="1"/>
</dbReference>
<dbReference type="PANTHER" id="PTHR11618:SF13">
    <property type="entry name" value="TRANSCRIPTION INITIATION FACTOR IIB"/>
    <property type="match status" value="1"/>
</dbReference>
<dbReference type="PANTHER" id="PTHR11618">
    <property type="entry name" value="TRANSCRIPTION INITIATION FACTOR IIB-RELATED"/>
    <property type="match status" value="1"/>
</dbReference>
<dbReference type="Pfam" id="PF00382">
    <property type="entry name" value="TFIIB"/>
    <property type="match status" value="2"/>
</dbReference>
<dbReference type="Pfam" id="PF08271">
    <property type="entry name" value="Zn_Ribbon_TF"/>
    <property type="match status" value="1"/>
</dbReference>
<dbReference type="PRINTS" id="PR00685">
    <property type="entry name" value="TIFACTORIIB"/>
</dbReference>
<dbReference type="SMART" id="SM00385">
    <property type="entry name" value="CYCLIN"/>
    <property type="match status" value="2"/>
</dbReference>
<dbReference type="SUPFAM" id="SSF47954">
    <property type="entry name" value="Cyclin-like"/>
    <property type="match status" value="2"/>
</dbReference>
<dbReference type="SUPFAM" id="SSF57783">
    <property type="entry name" value="Zinc beta-ribbon"/>
    <property type="match status" value="1"/>
</dbReference>
<dbReference type="PROSITE" id="PS00782">
    <property type="entry name" value="TFIIB"/>
    <property type="match status" value="2"/>
</dbReference>
<dbReference type="PROSITE" id="PS51134">
    <property type="entry name" value="ZF_TFIIB"/>
    <property type="match status" value="1"/>
</dbReference>
<protein>
    <recommendedName>
        <fullName evidence="1">Transcription initiation factor IIB 6</fullName>
        <shortName evidence="1">TFIIB 6</shortName>
    </recommendedName>
</protein>
<evidence type="ECO:0000255" key="1">
    <source>
        <dbReference type="HAMAP-Rule" id="MF_00383"/>
    </source>
</evidence>
<evidence type="ECO:0000255" key="2">
    <source>
        <dbReference type="PROSITE-ProRule" id="PRU00469"/>
    </source>
</evidence>
<evidence type="ECO:0000256" key="3">
    <source>
        <dbReference type="SAM" id="MobiDB-lite"/>
    </source>
</evidence>
<organism>
    <name type="scientific">Halobacterium salinarum (strain ATCC 700922 / JCM 11081 / NRC-1)</name>
    <name type="common">Halobacterium halobium</name>
    <dbReference type="NCBI Taxonomy" id="64091"/>
    <lineage>
        <taxon>Archaea</taxon>
        <taxon>Methanobacteriati</taxon>
        <taxon>Methanobacteriota</taxon>
        <taxon>Stenosarchaea group</taxon>
        <taxon>Halobacteria</taxon>
        <taxon>Halobacteriales</taxon>
        <taxon>Halobacteriaceae</taxon>
        <taxon>Halobacterium</taxon>
        <taxon>Halobacterium salinarum NRC-34001</taxon>
    </lineage>
</organism>
<comment type="function">
    <text evidence="1">Stabilizes TBP binding to an archaeal box-A promoter. Also responsible for recruiting RNA polymerase II to the pre-initiation complex (DNA-TBP-TFIIB).</text>
</comment>
<comment type="similarity">
    <text evidence="1">Belongs to the TFIIB family.</text>
</comment>
<reference key="1">
    <citation type="journal article" date="2000" name="Proc. Natl. Acad. Sci. U.S.A.">
        <title>Genome sequence of Halobacterium species NRC-1.</title>
        <authorList>
            <person name="Ng W.V."/>
            <person name="Kennedy S.P."/>
            <person name="Mahairas G.G."/>
            <person name="Berquist B."/>
            <person name="Pan M."/>
            <person name="Shukla H.D."/>
            <person name="Lasky S.R."/>
            <person name="Baliga N.S."/>
            <person name="Thorsson V."/>
            <person name="Sbrogna J."/>
            <person name="Swartzell S."/>
            <person name="Weir D."/>
            <person name="Hall J."/>
            <person name="Dahl T.A."/>
            <person name="Welti R."/>
            <person name="Goo Y.A."/>
            <person name="Leithauser B."/>
            <person name="Keller K."/>
            <person name="Cruz R."/>
            <person name="Danson M.J."/>
            <person name="Hough D.W."/>
            <person name="Maddocks D.G."/>
            <person name="Jablonski P.E."/>
            <person name="Krebs M.P."/>
            <person name="Angevine C.M."/>
            <person name="Dale H."/>
            <person name="Isenbarger T.A."/>
            <person name="Peck R.F."/>
            <person name="Pohlschroder M."/>
            <person name="Spudich J.L."/>
            <person name="Jung K.-H."/>
            <person name="Alam M."/>
            <person name="Freitas T."/>
            <person name="Hou S."/>
            <person name="Daniels C.J."/>
            <person name="Dennis P.P."/>
            <person name="Omer A.D."/>
            <person name="Ebhardt H."/>
            <person name="Lowe T.M."/>
            <person name="Liang P."/>
            <person name="Riley M."/>
            <person name="Hood L."/>
            <person name="DasSarma S."/>
        </authorList>
    </citation>
    <scope>NUCLEOTIDE SEQUENCE [LARGE SCALE GENOMIC DNA]</scope>
    <source>
        <strain>ATCC 700922 / JCM 11081 / NRC-1</strain>
    </source>
</reference>
<sequence length="319" mass="35327">MTDARMRSREQERTDETESESTDGCPECGGLVVNDEEHGESVCADCGLVVEEDGIDRGPEWRAFDSKEKDEKSRVGAPTTNTMHDKGLSTNIDWRDKDAYGNSLSSNQRQKMQRLRKWNERFRTRDAKERNLKQALGEIDRMASALGLPDNVRETASVIYRRALEDDLLPGRSIEGVATSCVYAAARQAGVPRSLDEIADVSRVEKAEIARTYRYVVRELGLEVAPADPESYVPRFASDLGLSDEASHRARELLKTAKDKGVHSGKSPVGLAAAAVYAAALLTNEKTTQAKVSEVADISEVTIRNRYHELLEAEDTIPV</sequence>
<accession>Q9HSB3</accession>
<name>TF2B6_HALSA</name>
<proteinExistence type="inferred from homology"/>
<gene>
    <name evidence="1" type="primary">tfbF</name>
    <name type="ordered locus">VNG_0315G</name>
</gene>
<feature type="chain" id="PRO_0000119316" description="Transcription initiation factor IIB 6">
    <location>
        <begin position="1"/>
        <end position="319"/>
    </location>
</feature>
<feature type="repeat" description="1">
    <location>
        <begin position="137"/>
        <end position="220"/>
    </location>
</feature>
<feature type="repeat" description="2">
    <location>
        <begin position="231"/>
        <end position="312"/>
    </location>
</feature>
<feature type="zinc finger region" description="TFIIB-type" evidence="2">
    <location>
        <begin position="21"/>
        <end position="51"/>
    </location>
</feature>
<feature type="region of interest" description="Disordered" evidence="3">
    <location>
        <begin position="1"/>
        <end position="33"/>
    </location>
</feature>
<feature type="region of interest" description="Disordered" evidence="3">
    <location>
        <begin position="59"/>
        <end position="89"/>
    </location>
</feature>
<feature type="compositionally biased region" description="Basic and acidic residues" evidence="3">
    <location>
        <begin position="1"/>
        <end position="16"/>
    </location>
</feature>
<feature type="compositionally biased region" description="Basic and acidic residues" evidence="3">
    <location>
        <begin position="59"/>
        <end position="74"/>
    </location>
</feature>
<feature type="binding site" evidence="2">
    <location>
        <position position="25"/>
    </location>
    <ligand>
        <name>Zn(2+)</name>
        <dbReference type="ChEBI" id="CHEBI:29105"/>
    </ligand>
</feature>
<feature type="binding site" evidence="2">
    <location>
        <position position="28"/>
    </location>
    <ligand>
        <name>Zn(2+)</name>
        <dbReference type="ChEBI" id="CHEBI:29105"/>
    </ligand>
</feature>
<feature type="binding site" evidence="2">
    <location>
        <position position="43"/>
    </location>
    <ligand>
        <name>Zn(2+)</name>
        <dbReference type="ChEBI" id="CHEBI:29105"/>
    </ligand>
</feature>
<feature type="binding site" evidence="2">
    <location>
        <position position="46"/>
    </location>
    <ligand>
        <name>Zn(2+)</name>
        <dbReference type="ChEBI" id="CHEBI:29105"/>
    </ligand>
</feature>
<keyword id="KW-0479">Metal-binding</keyword>
<keyword id="KW-1185">Reference proteome</keyword>
<keyword id="KW-0677">Repeat</keyword>
<keyword id="KW-0804">Transcription</keyword>
<keyword id="KW-0805">Transcription regulation</keyword>
<keyword id="KW-0862">Zinc</keyword>
<keyword id="KW-0863">Zinc-finger</keyword>